<protein>
    <recommendedName>
        <fullName evidence="1">Dihydroorotate dehydrogenase (quinone)</fullName>
        <ecNumber evidence="1">1.3.5.2</ecNumber>
    </recommendedName>
    <alternativeName>
        <fullName evidence="1">DHOdehase</fullName>
        <shortName evidence="1">DHOD</shortName>
        <shortName evidence="1">DHODase</shortName>
    </alternativeName>
    <alternativeName>
        <fullName evidence="1">Dihydroorotate oxidase</fullName>
    </alternativeName>
</protein>
<evidence type="ECO:0000255" key="1">
    <source>
        <dbReference type="HAMAP-Rule" id="MF_00225"/>
    </source>
</evidence>
<reference key="1">
    <citation type="journal article" date="2003" name="Proc. Natl. Acad. Sci. U.S.A.">
        <title>The complete genome sequence of the Arabidopsis and tomato pathogen Pseudomonas syringae pv. tomato DC3000.</title>
        <authorList>
            <person name="Buell C.R."/>
            <person name="Joardar V."/>
            <person name="Lindeberg M."/>
            <person name="Selengut J."/>
            <person name="Paulsen I.T."/>
            <person name="Gwinn M.L."/>
            <person name="Dodson R.J."/>
            <person name="DeBoy R.T."/>
            <person name="Durkin A.S."/>
            <person name="Kolonay J.F."/>
            <person name="Madupu R."/>
            <person name="Daugherty S.C."/>
            <person name="Brinkac L.M."/>
            <person name="Beanan M.J."/>
            <person name="Haft D.H."/>
            <person name="Nelson W.C."/>
            <person name="Davidsen T.M."/>
            <person name="Zafar N."/>
            <person name="Zhou L."/>
            <person name="Liu J."/>
            <person name="Yuan Q."/>
            <person name="Khouri H.M."/>
            <person name="Fedorova N.B."/>
            <person name="Tran B."/>
            <person name="Russell D."/>
            <person name="Berry K.J."/>
            <person name="Utterback T.R."/>
            <person name="Van Aken S.E."/>
            <person name="Feldblyum T.V."/>
            <person name="D'Ascenzo M."/>
            <person name="Deng W.-L."/>
            <person name="Ramos A.R."/>
            <person name="Alfano J.R."/>
            <person name="Cartinhour S."/>
            <person name="Chatterjee A.K."/>
            <person name="Delaney T.P."/>
            <person name="Lazarowitz S.G."/>
            <person name="Martin G.B."/>
            <person name="Schneider D.J."/>
            <person name="Tang X."/>
            <person name="Bender C.L."/>
            <person name="White O."/>
            <person name="Fraser C.M."/>
            <person name="Collmer A."/>
        </authorList>
    </citation>
    <scope>NUCLEOTIDE SEQUENCE [LARGE SCALE GENOMIC DNA]</scope>
    <source>
        <strain>ATCC BAA-871 / DC3000</strain>
    </source>
</reference>
<feature type="chain" id="PRO_0000148469" description="Dihydroorotate dehydrogenase (quinone)">
    <location>
        <begin position="1"/>
        <end position="343"/>
    </location>
</feature>
<feature type="active site" description="Nucleophile" evidence="1">
    <location>
        <position position="174"/>
    </location>
</feature>
<feature type="binding site" evidence="1">
    <location>
        <begin position="61"/>
        <end position="65"/>
    </location>
    <ligand>
        <name>FMN</name>
        <dbReference type="ChEBI" id="CHEBI:58210"/>
    </ligand>
</feature>
<feature type="binding site" evidence="1">
    <location>
        <position position="65"/>
    </location>
    <ligand>
        <name>substrate</name>
    </ligand>
</feature>
<feature type="binding site" evidence="1">
    <location>
        <position position="85"/>
    </location>
    <ligand>
        <name>FMN</name>
        <dbReference type="ChEBI" id="CHEBI:58210"/>
    </ligand>
</feature>
<feature type="binding site" evidence="1">
    <location>
        <begin position="110"/>
        <end position="114"/>
    </location>
    <ligand>
        <name>substrate</name>
    </ligand>
</feature>
<feature type="binding site" evidence="1">
    <location>
        <position position="138"/>
    </location>
    <ligand>
        <name>FMN</name>
        <dbReference type="ChEBI" id="CHEBI:58210"/>
    </ligand>
</feature>
<feature type="binding site" evidence="1">
    <location>
        <position position="171"/>
    </location>
    <ligand>
        <name>FMN</name>
        <dbReference type="ChEBI" id="CHEBI:58210"/>
    </ligand>
</feature>
<feature type="binding site" evidence="1">
    <location>
        <position position="171"/>
    </location>
    <ligand>
        <name>substrate</name>
    </ligand>
</feature>
<feature type="binding site" evidence="1">
    <location>
        <position position="176"/>
    </location>
    <ligand>
        <name>substrate</name>
    </ligand>
</feature>
<feature type="binding site" evidence="1">
    <location>
        <position position="216"/>
    </location>
    <ligand>
        <name>FMN</name>
        <dbReference type="ChEBI" id="CHEBI:58210"/>
    </ligand>
</feature>
<feature type="binding site" evidence="1">
    <location>
        <position position="244"/>
    </location>
    <ligand>
        <name>FMN</name>
        <dbReference type="ChEBI" id="CHEBI:58210"/>
    </ligand>
</feature>
<feature type="binding site" evidence="1">
    <location>
        <begin position="245"/>
        <end position="246"/>
    </location>
    <ligand>
        <name>substrate</name>
    </ligand>
</feature>
<feature type="binding site" evidence="1">
    <location>
        <position position="267"/>
    </location>
    <ligand>
        <name>FMN</name>
        <dbReference type="ChEBI" id="CHEBI:58210"/>
    </ligand>
</feature>
<feature type="binding site" evidence="1">
    <location>
        <position position="296"/>
    </location>
    <ligand>
        <name>FMN</name>
        <dbReference type="ChEBI" id="CHEBI:58210"/>
    </ligand>
</feature>
<feature type="binding site" evidence="1">
    <location>
        <begin position="317"/>
        <end position="318"/>
    </location>
    <ligand>
        <name>FMN</name>
        <dbReference type="ChEBI" id="CHEBI:58210"/>
    </ligand>
</feature>
<organism>
    <name type="scientific">Pseudomonas syringae pv. tomato (strain ATCC BAA-871 / DC3000)</name>
    <dbReference type="NCBI Taxonomy" id="223283"/>
    <lineage>
        <taxon>Bacteria</taxon>
        <taxon>Pseudomonadati</taxon>
        <taxon>Pseudomonadota</taxon>
        <taxon>Gammaproteobacteria</taxon>
        <taxon>Pseudomonadales</taxon>
        <taxon>Pseudomonadaceae</taxon>
        <taxon>Pseudomonas</taxon>
    </lineage>
</organism>
<sequence>MYNLARQLLFKLSPETSHDLSLDLIGAGGRLGLNGLLGKSAAKLPVSVMGLEFPNPVGLAAGLDKNGAAIDGFAQLGFGFVEIGTVTPRPQPGNPKPRIFRLPNAEAIINRMGFNNLGVDNLVSRVEAAKYRGILGINIGKNFDTPVERAVDDYLICLDKAYAHASYVTVNVSSPNTPGLRSLQFGDSLKQLLEALSLRQQELTQRHGKRVPLAIKIAPDMTDEETVLVAAALIESGMDAVIATNTTLSRQGVEGLPHGDEAGGLSGAPVREKSTHIVKVLAGELAGRMPIIAAGGITEGRHAAEKIAAGASLVQIYSGFIYKGPALIRQSVDAIAAMPRTAS</sequence>
<accession>Q883P1</accession>
<dbReference type="EC" id="1.3.5.2" evidence="1"/>
<dbReference type="EMBL" id="AE016853">
    <property type="protein sequence ID" value="AAO55823.1"/>
    <property type="molecule type" value="Genomic_DNA"/>
</dbReference>
<dbReference type="RefSeq" id="NP_792128.1">
    <property type="nucleotide sequence ID" value="NC_004578.1"/>
</dbReference>
<dbReference type="RefSeq" id="WP_011103942.1">
    <property type="nucleotide sequence ID" value="NC_004578.1"/>
</dbReference>
<dbReference type="SMR" id="Q883P1"/>
<dbReference type="STRING" id="223283.PSPTO_2309"/>
<dbReference type="GeneID" id="1183960"/>
<dbReference type="KEGG" id="pst:PSPTO_2309"/>
<dbReference type="PATRIC" id="fig|223283.9.peg.2345"/>
<dbReference type="eggNOG" id="COG0167">
    <property type="taxonomic scope" value="Bacteria"/>
</dbReference>
<dbReference type="HOGENOM" id="CLU_013640_2_0_6"/>
<dbReference type="OrthoDB" id="9802377at2"/>
<dbReference type="PhylomeDB" id="Q883P1"/>
<dbReference type="UniPathway" id="UPA00070">
    <property type="reaction ID" value="UER00946"/>
</dbReference>
<dbReference type="Proteomes" id="UP000002515">
    <property type="component" value="Chromosome"/>
</dbReference>
<dbReference type="GO" id="GO:0005737">
    <property type="term" value="C:cytoplasm"/>
    <property type="evidence" value="ECO:0007669"/>
    <property type="project" value="InterPro"/>
</dbReference>
<dbReference type="GO" id="GO:0005886">
    <property type="term" value="C:plasma membrane"/>
    <property type="evidence" value="ECO:0007669"/>
    <property type="project" value="UniProtKB-SubCell"/>
</dbReference>
<dbReference type="GO" id="GO:0106430">
    <property type="term" value="F:dihydroorotate dehydrogenase (quinone) activity"/>
    <property type="evidence" value="ECO:0007669"/>
    <property type="project" value="UniProtKB-EC"/>
</dbReference>
<dbReference type="GO" id="GO:0006207">
    <property type="term" value="P:'de novo' pyrimidine nucleobase biosynthetic process"/>
    <property type="evidence" value="ECO:0007669"/>
    <property type="project" value="InterPro"/>
</dbReference>
<dbReference type="GO" id="GO:0044205">
    <property type="term" value="P:'de novo' UMP biosynthetic process"/>
    <property type="evidence" value="ECO:0007669"/>
    <property type="project" value="UniProtKB-UniRule"/>
</dbReference>
<dbReference type="CDD" id="cd04738">
    <property type="entry name" value="DHOD_2_like"/>
    <property type="match status" value="1"/>
</dbReference>
<dbReference type="FunFam" id="3.20.20.70:FF:000028">
    <property type="entry name" value="Dihydroorotate dehydrogenase (quinone)"/>
    <property type="match status" value="1"/>
</dbReference>
<dbReference type="Gene3D" id="3.20.20.70">
    <property type="entry name" value="Aldolase class I"/>
    <property type="match status" value="1"/>
</dbReference>
<dbReference type="HAMAP" id="MF_00225">
    <property type="entry name" value="DHO_dh_type2"/>
    <property type="match status" value="1"/>
</dbReference>
<dbReference type="InterPro" id="IPR013785">
    <property type="entry name" value="Aldolase_TIM"/>
</dbReference>
<dbReference type="InterPro" id="IPR050074">
    <property type="entry name" value="DHO_dehydrogenase"/>
</dbReference>
<dbReference type="InterPro" id="IPR012135">
    <property type="entry name" value="Dihydroorotate_DH_1_2"/>
</dbReference>
<dbReference type="InterPro" id="IPR005719">
    <property type="entry name" value="Dihydroorotate_DH_2"/>
</dbReference>
<dbReference type="InterPro" id="IPR005720">
    <property type="entry name" value="Dihydroorotate_DH_cat"/>
</dbReference>
<dbReference type="InterPro" id="IPR001295">
    <property type="entry name" value="Dihydroorotate_DH_CS"/>
</dbReference>
<dbReference type="NCBIfam" id="NF003644">
    <property type="entry name" value="PRK05286.1-1"/>
    <property type="match status" value="1"/>
</dbReference>
<dbReference type="NCBIfam" id="NF003645">
    <property type="entry name" value="PRK05286.1-2"/>
    <property type="match status" value="1"/>
</dbReference>
<dbReference type="NCBIfam" id="NF003646">
    <property type="entry name" value="PRK05286.1-4"/>
    <property type="match status" value="1"/>
</dbReference>
<dbReference type="NCBIfam" id="NF003652">
    <property type="entry name" value="PRK05286.2-5"/>
    <property type="match status" value="1"/>
</dbReference>
<dbReference type="NCBIfam" id="TIGR01036">
    <property type="entry name" value="pyrD_sub2"/>
    <property type="match status" value="1"/>
</dbReference>
<dbReference type="PANTHER" id="PTHR48109:SF4">
    <property type="entry name" value="DIHYDROOROTATE DEHYDROGENASE (QUINONE), MITOCHONDRIAL"/>
    <property type="match status" value="1"/>
</dbReference>
<dbReference type="PANTHER" id="PTHR48109">
    <property type="entry name" value="DIHYDROOROTATE DEHYDROGENASE (QUINONE), MITOCHONDRIAL-RELATED"/>
    <property type="match status" value="1"/>
</dbReference>
<dbReference type="Pfam" id="PF01180">
    <property type="entry name" value="DHO_dh"/>
    <property type="match status" value="1"/>
</dbReference>
<dbReference type="PIRSF" id="PIRSF000164">
    <property type="entry name" value="DHO_oxidase"/>
    <property type="match status" value="1"/>
</dbReference>
<dbReference type="SUPFAM" id="SSF51395">
    <property type="entry name" value="FMN-linked oxidoreductases"/>
    <property type="match status" value="1"/>
</dbReference>
<dbReference type="PROSITE" id="PS00911">
    <property type="entry name" value="DHODEHASE_1"/>
    <property type="match status" value="1"/>
</dbReference>
<comment type="function">
    <text evidence="1">Catalyzes the conversion of dihydroorotate to orotate with quinone as electron acceptor.</text>
</comment>
<comment type="catalytic activity">
    <reaction evidence="1">
        <text>(S)-dihydroorotate + a quinone = orotate + a quinol</text>
        <dbReference type="Rhea" id="RHEA:30187"/>
        <dbReference type="ChEBI" id="CHEBI:24646"/>
        <dbReference type="ChEBI" id="CHEBI:30839"/>
        <dbReference type="ChEBI" id="CHEBI:30864"/>
        <dbReference type="ChEBI" id="CHEBI:132124"/>
        <dbReference type="EC" id="1.3.5.2"/>
    </reaction>
</comment>
<comment type="cofactor">
    <cofactor evidence="1">
        <name>FMN</name>
        <dbReference type="ChEBI" id="CHEBI:58210"/>
    </cofactor>
    <text evidence="1">Binds 1 FMN per subunit.</text>
</comment>
<comment type="pathway">
    <text evidence="1">Pyrimidine metabolism; UMP biosynthesis via de novo pathway; orotate from (S)-dihydroorotate (quinone route): step 1/1.</text>
</comment>
<comment type="subunit">
    <text evidence="1">Monomer.</text>
</comment>
<comment type="subcellular location">
    <subcellularLocation>
        <location evidence="1">Cell membrane</location>
        <topology evidence="1">Peripheral membrane protein</topology>
    </subcellularLocation>
</comment>
<comment type="similarity">
    <text evidence="1">Belongs to the dihydroorotate dehydrogenase family. Type 2 subfamily.</text>
</comment>
<gene>
    <name evidence="1" type="primary">pyrD</name>
    <name type="ordered locus">PSPTO_2309</name>
</gene>
<proteinExistence type="inferred from homology"/>
<name>PYRD_PSESM</name>
<keyword id="KW-1003">Cell membrane</keyword>
<keyword id="KW-0285">Flavoprotein</keyword>
<keyword id="KW-0288">FMN</keyword>
<keyword id="KW-0472">Membrane</keyword>
<keyword id="KW-0560">Oxidoreductase</keyword>
<keyword id="KW-0665">Pyrimidine biosynthesis</keyword>
<keyword id="KW-1185">Reference proteome</keyword>